<sequence>MRVVVQRVNKSSVKVDNEIVGSINKGFNVLVGIGKEDTIEDLKYMKDKVLNLRVFEDEEDKMNLSLKDVCGELLLISQFTLYGDCRKGRRPNFMNALGGDEAKKLFDEFVSMCREEGIKVETGVFGAHMVVDIENDGPVTLILDSKKNF</sequence>
<reference key="1">
    <citation type="journal article" date="2006" name="Genome Res.">
        <title>Skewed genomic variability in strains of the toxigenic bacterial pathogen, Clostridium perfringens.</title>
        <authorList>
            <person name="Myers G.S.A."/>
            <person name="Rasko D.A."/>
            <person name="Cheung J.K."/>
            <person name="Ravel J."/>
            <person name="Seshadri R."/>
            <person name="DeBoy R.T."/>
            <person name="Ren Q."/>
            <person name="Varga J."/>
            <person name="Awad M.M."/>
            <person name="Brinkac L.M."/>
            <person name="Daugherty S.C."/>
            <person name="Haft D.H."/>
            <person name="Dodson R.J."/>
            <person name="Madupu R."/>
            <person name="Nelson W.C."/>
            <person name="Rosovitz M.J."/>
            <person name="Sullivan S.A."/>
            <person name="Khouri H."/>
            <person name="Dimitrov G.I."/>
            <person name="Watkins K.L."/>
            <person name="Mulligan S."/>
            <person name="Benton J."/>
            <person name="Radune D."/>
            <person name="Fisher D.J."/>
            <person name="Atkins H.S."/>
            <person name="Hiscox T."/>
            <person name="Jost B.H."/>
            <person name="Billington S.J."/>
            <person name="Songer J.G."/>
            <person name="McClane B.A."/>
            <person name="Titball R.W."/>
            <person name="Rood J.I."/>
            <person name="Melville S.B."/>
            <person name="Paulsen I.T."/>
        </authorList>
    </citation>
    <scope>NUCLEOTIDE SEQUENCE [LARGE SCALE GENOMIC DNA]</scope>
    <source>
        <strain>ATCC 13124 / DSM 756 / JCM 1290 / NCIMB 6125 / NCTC 8237 / S 107 / Type A</strain>
    </source>
</reference>
<dbReference type="EC" id="3.1.1.96" evidence="1"/>
<dbReference type="EMBL" id="CP000246">
    <property type="protein sequence ID" value="ABG83043.1"/>
    <property type="molecule type" value="Genomic_DNA"/>
</dbReference>
<dbReference type="RefSeq" id="WP_003451157.1">
    <property type="nucleotide sequence ID" value="NC_008261.1"/>
</dbReference>
<dbReference type="SMR" id="Q0TP24"/>
<dbReference type="STRING" id="195103.CPF_2192"/>
<dbReference type="PaxDb" id="195103-CPF_2192"/>
<dbReference type="GeneID" id="93001527"/>
<dbReference type="KEGG" id="cpf:CPF_2192"/>
<dbReference type="eggNOG" id="COG1490">
    <property type="taxonomic scope" value="Bacteria"/>
</dbReference>
<dbReference type="HOGENOM" id="CLU_076901_1_0_9"/>
<dbReference type="Proteomes" id="UP000001823">
    <property type="component" value="Chromosome"/>
</dbReference>
<dbReference type="GO" id="GO:0005737">
    <property type="term" value="C:cytoplasm"/>
    <property type="evidence" value="ECO:0007669"/>
    <property type="project" value="UniProtKB-SubCell"/>
</dbReference>
<dbReference type="GO" id="GO:0051500">
    <property type="term" value="F:D-tyrosyl-tRNA(Tyr) deacylase activity"/>
    <property type="evidence" value="ECO:0007669"/>
    <property type="project" value="TreeGrafter"/>
</dbReference>
<dbReference type="GO" id="GO:0106026">
    <property type="term" value="F:Gly-tRNA(Ala) deacylase activity"/>
    <property type="evidence" value="ECO:0007669"/>
    <property type="project" value="UniProtKB-UniRule"/>
</dbReference>
<dbReference type="GO" id="GO:0043908">
    <property type="term" value="F:Ser(Gly)-tRNA(Ala) hydrolase activity"/>
    <property type="evidence" value="ECO:0007669"/>
    <property type="project" value="UniProtKB-UniRule"/>
</dbReference>
<dbReference type="GO" id="GO:0000049">
    <property type="term" value="F:tRNA binding"/>
    <property type="evidence" value="ECO:0007669"/>
    <property type="project" value="UniProtKB-UniRule"/>
</dbReference>
<dbReference type="GO" id="GO:0019478">
    <property type="term" value="P:D-amino acid catabolic process"/>
    <property type="evidence" value="ECO:0007669"/>
    <property type="project" value="UniProtKB-UniRule"/>
</dbReference>
<dbReference type="CDD" id="cd00563">
    <property type="entry name" value="Dtyr_deacylase"/>
    <property type="match status" value="1"/>
</dbReference>
<dbReference type="FunFam" id="3.50.80.10:FF:000001">
    <property type="entry name" value="D-aminoacyl-tRNA deacylase"/>
    <property type="match status" value="1"/>
</dbReference>
<dbReference type="Gene3D" id="3.50.80.10">
    <property type="entry name" value="D-tyrosyl-tRNA(Tyr) deacylase"/>
    <property type="match status" value="1"/>
</dbReference>
<dbReference type="HAMAP" id="MF_00518">
    <property type="entry name" value="Deacylase_Dtd"/>
    <property type="match status" value="1"/>
</dbReference>
<dbReference type="InterPro" id="IPR003732">
    <property type="entry name" value="Daa-tRNA_deacyls_DTD"/>
</dbReference>
<dbReference type="InterPro" id="IPR023509">
    <property type="entry name" value="DTD-like_sf"/>
</dbReference>
<dbReference type="NCBIfam" id="TIGR00256">
    <property type="entry name" value="D-aminoacyl-tRNA deacylase"/>
    <property type="match status" value="1"/>
</dbReference>
<dbReference type="PANTHER" id="PTHR10472:SF5">
    <property type="entry name" value="D-AMINOACYL-TRNA DEACYLASE 1"/>
    <property type="match status" value="1"/>
</dbReference>
<dbReference type="PANTHER" id="PTHR10472">
    <property type="entry name" value="D-TYROSYL-TRNA TYR DEACYLASE"/>
    <property type="match status" value="1"/>
</dbReference>
<dbReference type="Pfam" id="PF02580">
    <property type="entry name" value="Tyr_Deacylase"/>
    <property type="match status" value="1"/>
</dbReference>
<dbReference type="SUPFAM" id="SSF69500">
    <property type="entry name" value="DTD-like"/>
    <property type="match status" value="1"/>
</dbReference>
<keyword id="KW-0963">Cytoplasm</keyword>
<keyword id="KW-0378">Hydrolase</keyword>
<keyword id="KW-0694">RNA-binding</keyword>
<keyword id="KW-0820">tRNA-binding</keyword>
<proteinExistence type="inferred from homology"/>
<evidence type="ECO:0000255" key="1">
    <source>
        <dbReference type="HAMAP-Rule" id="MF_00518"/>
    </source>
</evidence>
<feature type="chain" id="PRO_0000259272" description="D-aminoacyl-tRNA deacylase">
    <location>
        <begin position="1"/>
        <end position="149"/>
    </location>
</feature>
<feature type="short sequence motif" description="Gly-cisPro motif, important for rejection of L-amino acids" evidence="1">
    <location>
        <begin position="137"/>
        <end position="138"/>
    </location>
</feature>
<comment type="function">
    <text evidence="1">An aminoacyl-tRNA editing enzyme that deacylates mischarged D-aminoacyl-tRNAs. Also deacylates mischarged glycyl-tRNA(Ala), protecting cells against glycine mischarging by AlaRS. Acts via tRNA-based rather than protein-based catalysis; rejects L-amino acids rather than detecting D-amino acids in the active site. By recycling D-aminoacyl-tRNA to D-amino acids and free tRNA molecules, this enzyme counteracts the toxicity associated with the formation of D-aminoacyl-tRNA entities in vivo and helps enforce protein L-homochirality.</text>
</comment>
<comment type="catalytic activity">
    <reaction evidence="1">
        <text>glycyl-tRNA(Ala) + H2O = tRNA(Ala) + glycine + H(+)</text>
        <dbReference type="Rhea" id="RHEA:53744"/>
        <dbReference type="Rhea" id="RHEA-COMP:9657"/>
        <dbReference type="Rhea" id="RHEA-COMP:13640"/>
        <dbReference type="ChEBI" id="CHEBI:15377"/>
        <dbReference type="ChEBI" id="CHEBI:15378"/>
        <dbReference type="ChEBI" id="CHEBI:57305"/>
        <dbReference type="ChEBI" id="CHEBI:78442"/>
        <dbReference type="ChEBI" id="CHEBI:78522"/>
        <dbReference type="EC" id="3.1.1.96"/>
    </reaction>
</comment>
<comment type="catalytic activity">
    <reaction evidence="1">
        <text>a D-aminoacyl-tRNA + H2O = a tRNA + a D-alpha-amino acid + H(+)</text>
        <dbReference type="Rhea" id="RHEA:13953"/>
        <dbReference type="Rhea" id="RHEA-COMP:10123"/>
        <dbReference type="Rhea" id="RHEA-COMP:10124"/>
        <dbReference type="ChEBI" id="CHEBI:15377"/>
        <dbReference type="ChEBI" id="CHEBI:15378"/>
        <dbReference type="ChEBI" id="CHEBI:59871"/>
        <dbReference type="ChEBI" id="CHEBI:78442"/>
        <dbReference type="ChEBI" id="CHEBI:79333"/>
        <dbReference type="EC" id="3.1.1.96"/>
    </reaction>
</comment>
<comment type="subunit">
    <text evidence="1">Homodimer.</text>
</comment>
<comment type="subcellular location">
    <subcellularLocation>
        <location evidence="1">Cytoplasm</location>
    </subcellularLocation>
</comment>
<comment type="domain">
    <text evidence="1">A Gly-cisPro motif from one monomer fits into the active site of the other monomer to allow specific chiral rejection of L-amino acids.</text>
</comment>
<comment type="similarity">
    <text evidence="1">Belongs to the DTD family.</text>
</comment>
<accession>Q0TP24</accession>
<protein>
    <recommendedName>
        <fullName evidence="1">D-aminoacyl-tRNA deacylase</fullName>
        <shortName evidence="1">DTD</shortName>
        <ecNumber evidence="1">3.1.1.96</ecNumber>
    </recommendedName>
    <alternativeName>
        <fullName evidence="1">Gly-tRNA(Ala) deacylase</fullName>
    </alternativeName>
</protein>
<organism>
    <name type="scientific">Clostridium perfringens (strain ATCC 13124 / DSM 756 / JCM 1290 / NCIMB 6125 / NCTC 8237 / Type A)</name>
    <dbReference type="NCBI Taxonomy" id="195103"/>
    <lineage>
        <taxon>Bacteria</taxon>
        <taxon>Bacillati</taxon>
        <taxon>Bacillota</taxon>
        <taxon>Clostridia</taxon>
        <taxon>Eubacteriales</taxon>
        <taxon>Clostridiaceae</taxon>
        <taxon>Clostridium</taxon>
    </lineage>
</organism>
<gene>
    <name evidence="1" type="primary">dtd</name>
    <name type="ordered locus">CPF_2192</name>
</gene>
<name>DTD_CLOP1</name>